<name>RM23_ANOGA</name>
<evidence type="ECO:0000250" key="1">
    <source>
        <dbReference type="UniProtKB" id="Q16540"/>
    </source>
</evidence>
<evidence type="ECO:0000256" key="2">
    <source>
        <dbReference type="SAM" id="MobiDB-lite"/>
    </source>
</evidence>
<evidence type="ECO:0000305" key="3"/>
<keyword id="KW-0496">Mitochondrion</keyword>
<keyword id="KW-1185">Reference proteome</keyword>
<keyword id="KW-0687">Ribonucleoprotein</keyword>
<keyword id="KW-0689">Ribosomal protein</keyword>
<organism>
    <name type="scientific">Anopheles gambiae</name>
    <name type="common">African malaria mosquito</name>
    <dbReference type="NCBI Taxonomy" id="7165"/>
    <lineage>
        <taxon>Eukaryota</taxon>
        <taxon>Metazoa</taxon>
        <taxon>Ecdysozoa</taxon>
        <taxon>Arthropoda</taxon>
        <taxon>Hexapoda</taxon>
        <taxon>Insecta</taxon>
        <taxon>Pterygota</taxon>
        <taxon>Neoptera</taxon>
        <taxon>Endopterygota</taxon>
        <taxon>Diptera</taxon>
        <taxon>Nematocera</taxon>
        <taxon>Culicoidea</taxon>
        <taxon>Culicidae</taxon>
        <taxon>Anophelinae</taxon>
        <taxon>Anopheles</taxon>
    </lineage>
</organism>
<gene>
    <name type="primary">mRpL23</name>
    <name type="ORF">AGAP010338</name>
</gene>
<sequence length="151" mass="17767">MSSRWYPIYQRGNPQLRVFLPNFWLKLVRPANEQPPNVVQFACSMEMTRHDVKNYLEKIYNVPVVNVRTRIALGGTKRDLVLGYITKEEDTKYAYVTLPRTKQFTFPDIFPTDAKQKIEDDKKSLEDAKKNHKKFLDKNKDRPGTPGWFSI</sequence>
<accession>Q5TUE9</accession>
<proteinExistence type="inferred from homology"/>
<feature type="chain" id="PRO_0000129490" description="Large ribosomal subunit protein uL23m">
    <location>
        <begin position="1"/>
        <end position="151"/>
    </location>
</feature>
<feature type="region of interest" description="Disordered" evidence="2">
    <location>
        <begin position="120"/>
        <end position="151"/>
    </location>
</feature>
<feature type="compositionally biased region" description="Basic and acidic residues" evidence="2">
    <location>
        <begin position="120"/>
        <end position="143"/>
    </location>
</feature>
<protein>
    <recommendedName>
        <fullName evidence="3">Large ribosomal subunit protein uL23m</fullName>
    </recommendedName>
    <alternativeName>
        <fullName evidence="3">39S ribosomal protein L23, mitochondrial</fullName>
        <shortName>L23mt</shortName>
        <shortName>MRP-L23</shortName>
    </alternativeName>
</protein>
<dbReference type="EMBL" id="AAAB01008849">
    <property type="protein sequence ID" value="EAL41058.1"/>
    <property type="molecule type" value="Genomic_DNA"/>
</dbReference>
<dbReference type="SMR" id="Q5TUE9"/>
<dbReference type="FunCoup" id="Q5TUE9">
    <property type="interactions" value="211"/>
</dbReference>
<dbReference type="STRING" id="7165.Q5TUE9"/>
<dbReference type="PaxDb" id="7165-AGAP010338-PA"/>
<dbReference type="EnsemblMetazoa" id="AGAP010338-RA">
    <property type="protein sequence ID" value="AGAP010338-PA"/>
    <property type="gene ID" value="AGAP010338"/>
</dbReference>
<dbReference type="GeneID" id="3291064"/>
<dbReference type="KEGG" id="aga:3291064"/>
<dbReference type="CTD" id="6150"/>
<dbReference type="VEuPathDB" id="VectorBase:AGAMI1_013048"/>
<dbReference type="VEuPathDB" id="VectorBase:AGAP010338"/>
<dbReference type="eggNOG" id="KOG4089">
    <property type="taxonomic scope" value="Eukaryota"/>
</dbReference>
<dbReference type="HOGENOM" id="CLU_103097_1_1_1"/>
<dbReference type="InParanoid" id="Q5TUE9"/>
<dbReference type="OMA" id="PNFWLKL"/>
<dbReference type="OrthoDB" id="275582at2759"/>
<dbReference type="PhylomeDB" id="Q5TUE9"/>
<dbReference type="Proteomes" id="UP000007062">
    <property type="component" value="Chromosome 3L"/>
</dbReference>
<dbReference type="GO" id="GO:0005762">
    <property type="term" value="C:mitochondrial large ribosomal subunit"/>
    <property type="evidence" value="ECO:0000250"/>
    <property type="project" value="UniProtKB"/>
</dbReference>
<dbReference type="GO" id="GO:0003735">
    <property type="term" value="F:structural constituent of ribosome"/>
    <property type="evidence" value="ECO:0000318"/>
    <property type="project" value="GO_Central"/>
</dbReference>
<dbReference type="GO" id="GO:0032543">
    <property type="term" value="P:mitochondrial translation"/>
    <property type="evidence" value="ECO:0000318"/>
    <property type="project" value="GO_Central"/>
</dbReference>
<dbReference type="FunFam" id="3.30.70.330:FF:000284">
    <property type="entry name" value="39S ribosomal protein L23, mitochondrial"/>
    <property type="match status" value="1"/>
</dbReference>
<dbReference type="Gene3D" id="3.30.70.330">
    <property type="match status" value="1"/>
</dbReference>
<dbReference type="InterPro" id="IPR012677">
    <property type="entry name" value="Nucleotide-bd_a/b_plait_sf"/>
</dbReference>
<dbReference type="InterPro" id="IPR013025">
    <property type="entry name" value="Ribosomal_uL23-like"/>
</dbReference>
<dbReference type="InterPro" id="IPR012678">
    <property type="entry name" value="Ribosomal_uL23/eL15/eS24_sf"/>
</dbReference>
<dbReference type="PANTHER" id="PTHR12059:SF5">
    <property type="entry name" value="LARGE RIBOSOMAL SUBUNIT PROTEIN UL23M"/>
    <property type="match status" value="1"/>
</dbReference>
<dbReference type="PANTHER" id="PTHR12059">
    <property type="entry name" value="RIBOSOMAL PROTEIN L23-RELATED"/>
    <property type="match status" value="1"/>
</dbReference>
<dbReference type="Pfam" id="PF00276">
    <property type="entry name" value="Ribosomal_L23"/>
    <property type="match status" value="1"/>
</dbReference>
<dbReference type="SUPFAM" id="SSF54189">
    <property type="entry name" value="Ribosomal proteins S24e, L23 and L15e"/>
    <property type="match status" value="1"/>
</dbReference>
<comment type="subunit">
    <text evidence="1">Component of the mitochondrial ribosome large subunit (39S) which comprises a 16S rRNA and about 50 distinct proteins.</text>
</comment>
<comment type="subcellular location">
    <subcellularLocation>
        <location evidence="1">Mitochondrion</location>
    </subcellularLocation>
</comment>
<comment type="similarity">
    <text evidence="3">Belongs to the universal ribosomal protein uL23 family.</text>
</comment>
<reference key="1">
    <citation type="journal article" date="2002" name="Science">
        <title>The genome sequence of the malaria mosquito Anopheles gambiae.</title>
        <authorList>
            <person name="Holt R.A."/>
            <person name="Subramanian G.M."/>
            <person name="Halpern A."/>
            <person name="Sutton G.G."/>
            <person name="Charlab R."/>
            <person name="Nusskern D.R."/>
            <person name="Wincker P."/>
            <person name="Clark A.G."/>
            <person name="Ribeiro J.M.C."/>
            <person name="Wides R."/>
            <person name="Salzberg S.L."/>
            <person name="Loftus B.J."/>
            <person name="Yandell M.D."/>
            <person name="Majoros W.H."/>
            <person name="Rusch D.B."/>
            <person name="Lai Z."/>
            <person name="Kraft C.L."/>
            <person name="Abril J.F."/>
            <person name="Anthouard V."/>
            <person name="Arensburger P."/>
            <person name="Atkinson P.W."/>
            <person name="Baden H."/>
            <person name="de Berardinis V."/>
            <person name="Baldwin D."/>
            <person name="Benes V."/>
            <person name="Biedler J."/>
            <person name="Blass C."/>
            <person name="Bolanos R."/>
            <person name="Boscus D."/>
            <person name="Barnstead M."/>
            <person name="Cai S."/>
            <person name="Center A."/>
            <person name="Chaturverdi K."/>
            <person name="Christophides G.K."/>
            <person name="Chrystal M.A.M."/>
            <person name="Clamp M."/>
            <person name="Cravchik A."/>
            <person name="Curwen V."/>
            <person name="Dana A."/>
            <person name="Delcher A."/>
            <person name="Dew I."/>
            <person name="Evans C.A."/>
            <person name="Flanigan M."/>
            <person name="Grundschober-Freimoser A."/>
            <person name="Friedli L."/>
            <person name="Gu Z."/>
            <person name="Guan P."/>
            <person name="Guigo R."/>
            <person name="Hillenmeyer M.E."/>
            <person name="Hladun S.L."/>
            <person name="Hogan J.R."/>
            <person name="Hong Y.S."/>
            <person name="Hoover J."/>
            <person name="Jaillon O."/>
            <person name="Ke Z."/>
            <person name="Kodira C.D."/>
            <person name="Kokoza E."/>
            <person name="Koutsos A."/>
            <person name="Letunic I."/>
            <person name="Levitsky A.A."/>
            <person name="Liang Y."/>
            <person name="Lin J.-J."/>
            <person name="Lobo N.F."/>
            <person name="Lopez J.R."/>
            <person name="Malek J.A."/>
            <person name="McIntosh T.C."/>
            <person name="Meister S."/>
            <person name="Miller J.R."/>
            <person name="Mobarry C."/>
            <person name="Mongin E."/>
            <person name="Murphy S.D."/>
            <person name="O'Brochta D.A."/>
            <person name="Pfannkoch C."/>
            <person name="Qi R."/>
            <person name="Regier M.A."/>
            <person name="Remington K."/>
            <person name="Shao H."/>
            <person name="Sharakhova M.V."/>
            <person name="Sitter C.D."/>
            <person name="Shetty J."/>
            <person name="Smith T.J."/>
            <person name="Strong R."/>
            <person name="Sun J."/>
            <person name="Thomasova D."/>
            <person name="Ton L.Q."/>
            <person name="Topalis P."/>
            <person name="Tu Z.J."/>
            <person name="Unger M.F."/>
            <person name="Walenz B."/>
            <person name="Wang A.H."/>
            <person name="Wang J."/>
            <person name="Wang M."/>
            <person name="Wang X."/>
            <person name="Woodford K.J."/>
            <person name="Wortman J.R."/>
            <person name="Wu M."/>
            <person name="Yao A."/>
            <person name="Zdobnov E.M."/>
            <person name="Zhang H."/>
            <person name="Zhao Q."/>
            <person name="Zhao S."/>
            <person name="Zhu S.C."/>
            <person name="Zhimulev I."/>
            <person name="Coluzzi M."/>
            <person name="della Torre A."/>
            <person name="Roth C.W."/>
            <person name="Louis C."/>
            <person name="Kalush F."/>
            <person name="Mural R.J."/>
            <person name="Myers E.W."/>
            <person name="Adams M.D."/>
            <person name="Smith H.O."/>
            <person name="Broder S."/>
            <person name="Gardner M.J."/>
            <person name="Fraser C.M."/>
            <person name="Birney E."/>
            <person name="Bork P."/>
            <person name="Brey P.T."/>
            <person name="Venter J.C."/>
            <person name="Weissenbach J."/>
            <person name="Kafatos F.C."/>
            <person name="Collins F.H."/>
            <person name="Hoffman S.L."/>
        </authorList>
    </citation>
    <scope>NUCLEOTIDE SEQUENCE [LARGE SCALE GENOMIC DNA]</scope>
    <source>
        <strain>PEST</strain>
    </source>
</reference>